<reference key="1">
    <citation type="journal article" date="1992" name="J. Bacteriol.">
        <title>MxiJ, a lipoprotein involved in secretion of Shigella Ipa invasins, is homologous to YscJ, a secretion factor of the Yersinia Yop proteins.</title>
        <authorList>
            <person name="Allaoui A."/>
            <person name="Sansonetti P.J."/>
            <person name="Parsot C."/>
        </authorList>
    </citation>
    <scope>NUCLEOTIDE SEQUENCE [GENOMIC DNA]</scope>
    <source>
        <strain>M90T / Serotype 5a</strain>
        <plasmid>pWR100</plasmid>
    </source>
</reference>
<reference key="2">
    <citation type="journal article" date="2000" name="Mol. Microbiol.">
        <title>The virulence plasmid pWR100 and the repertoire of proteins secreted by the type III secretion apparatus of Shigella flexneri.</title>
        <authorList>
            <person name="Buchrieser C."/>
            <person name="Glaser P."/>
            <person name="Rusniok C."/>
            <person name="Nedjari H."/>
            <person name="d'Hauteville H."/>
            <person name="Kunst F."/>
            <person name="Sansonetti P.J."/>
            <person name="Parsot C."/>
        </authorList>
    </citation>
    <scope>NUCLEOTIDE SEQUENCE [GENOMIC DNA]</scope>
    <source>
        <strain>M90T / Serotype 5a</strain>
        <plasmid>pWR100</plasmid>
    </source>
</reference>
<reference key="3">
    <citation type="journal article" date="2001" name="Infect. Immun.">
        <title>Complete DNA sequence and analysis of the large virulence plasmid of Shigella flexneri.</title>
        <authorList>
            <person name="Venkatesan M.M."/>
            <person name="Goldberg M.B."/>
            <person name="Rose D.J."/>
            <person name="Grotbeck E.J."/>
            <person name="Burland V."/>
            <person name="Blattner F.R."/>
        </authorList>
    </citation>
    <scope>NUCLEOTIDE SEQUENCE [GENOMIC DNA]</scope>
    <source>
        <strain>M90T / Serotype 5a</strain>
        <plasmid>pWR501</plasmid>
    </source>
</reference>
<reference key="4">
    <citation type="journal article" date="2002" name="Nucleic Acids Res.">
        <title>Genome sequence of Shigella flexneri 2a: insights into pathogenicity through comparison with genomes of Escherichia coli K12 and O157.</title>
        <authorList>
            <person name="Jin Q."/>
            <person name="Yuan Z."/>
            <person name="Xu J."/>
            <person name="Wang Y."/>
            <person name="Shen Y."/>
            <person name="Lu W."/>
            <person name="Wang J."/>
            <person name="Liu H."/>
            <person name="Yang J."/>
            <person name="Yang F."/>
            <person name="Zhang X."/>
            <person name="Zhang J."/>
            <person name="Yang G."/>
            <person name="Wu H."/>
            <person name="Qu D."/>
            <person name="Dong J."/>
            <person name="Sun L."/>
            <person name="Xue Y."/>
            <person name="Zhao A."/>
            <person name="Gao Y."/>
            <person name="Zhu J."/>
            <person name="Kan B."/>
            <person name="Ding K."/>
            <person name="Chen S."/>
            <person name="Cheng H."/>
            <person name="Yao Z."/>
            <person name="He B."/>
            <person name="Chen R."/>
            <person name="Ma D."/>
            <person name="Qiang B."/>
            <person name="Wen Y."/>
            <person name="Hou Y."/>
            <person name="Yu J."/>
        </authorList>
    </citation>
    <scope>NUCLEOTIDE SEQUENCE [LARGE SCALE GENOMIC DNA]</scope>
    <source>
        <strain>301 / Serotype 2a</strain>
        <plasmid>pCP301</plasmid>
    </source>
</reference>
<reference key="5">
    <citation type="journal article" date="1995" name="Mol. Microbiol.">
        <title>MxiG, a membrane protein required for secretion of Shigella spp. Ipa invasins: involvement in entry into epithelial cells and in intercellular dissemination.</title>
        <authorList>
            <person name="Allaoui A."/>
            <person name="Sansonetti P.J."/>
            <person name="Menard R."/>
            <person name="Barzu S."/>
            <person name="Mounier J."/>
            <person name="Phalipon A."/>
            <person name="Parsot C."/>
        </authorList>
    </citation>
    <scope>NUCLEOTIDE SEQUENCE [GENOMIC DNA] OF 1-13</scope>
    <source>
        <strain>M90T / Serotype 5a</strain>
        <plasmid>pWR100</plasmid>
    </source>
</reference>
<reference key="6">
    <citation type="journal article" date="2006" name="Acta Crystallogr. F">
        <title>Expression, purification, crystallization and preliminary crystallographic analysis of MxiH, a subunit of the Shigella flexneri type III secretion system needle.</title>
        <authorList>
            <person name="Deane J.E."/>
            <person name="Cordes F.S."/>
            <person name="Roversi P."/>
            <person name="Johnson S."/>
            <person name="Kenjale R."/>
            <person name="Picking W.D."/>
            <person name="Picking W.L."/>
            <person name="Lea S.M."/>
            <person name="Blocker A."/>
        </authorList>
    </citation>
    <scope>SUBUNIT</scope>
    <scope>CRYSTALLIZATION</scope>
</reference>
<reference key="7">
    <citation type="journal article" date="2006" name="Protein Sci.">
        <title>Physical characterization of MxiH and PrgI, the needle component of the type III secretion apparatus from Shigella and Salmonella.</title>
        <authorList>
            <person name="Darboe N."/>
            <person name="Kenjale R."/>
            <person name="Picking W.L."/>
            <person name="Picking W.D."/>
            <person name="Middaugh C.R."/>
        </authorList>
    </citation>
    <scope>FUNCTION</scope>
    <scope>SUBUNIT</scope>
    <scope>DOMAIN</scope>
    <scope>MUTAGENESIS OF 79-ILE--ARG-83</scope>
</reference>
<reference key="8">
    <citation type="journal article" date="2007" name="J. Biol. Chem.">
        <title>Identification of the MxiH needle protein residues responsible for anchoring invasion plasmid antigen D to the type III secretion needle tip.</title>
        <authorList>
            <person name="Zhang L."/>
            <person name="Wang Y."/>
            <person name="Olive A.J."/>
            <person name="Smith N.D."/>
            <person name="Picking W.D."/>
            <person name="De Guzman R.N."/>
            <person name="Picking W.L."/>
        </authorList>
    </citation>
    <scope>INTERACTION WITH IPAD/SCTA</scope>
    <scope>MUTAGENESIS OF LEU-34; ASN-40; ASN-43; LEU-47 AND TYR-50</scope>
    <source>
        <strain>SH116</strain>
    </source>
</reference>
<reference key="9">
    <citation type="journal article" date="2014" name="Infect. Immun.">
        <title>Type III secretion needle proteins induce cell signaling and cytokine secretion via Toll-like receptors.</title>
        <authorList>
            <person name="Jessen D.L."/>
            <person name="Osei-Owusu P."/>
            <person name="Toosky M."/>
            <person name="Roughead W."/>
            <person name="Bradley D.S."/>
            <person name="Nilles M.L."/>
        </authorList>
    </citation>
    <scope>FUNCTION IN INDUCTION OF HOST CELLULAR RESPONSES</scope>
</reference>
<reference key="10">
    <citation type="journal article" date="1998" name="Microbiol. Mol. Biol. Rev.">
        <title>Type III protein secretion systems in bacterial pathogens of animals and plants.</title>
        <authorList>
            <person name="Hueck C.J."/>
        </authorList>
    </citation>
    <scope>REVIEW</scope>
    <scope>NOMENCLATURE</scope>
</reference>
<reference key="11">
    <citation type="journal article" date="2018" name="FEMS Microbiol. Lett.">
        <title>Bacterial type III secretion systems: a complex device for the delivery of bacterial effector proteins into eukaryotic host cells.</title>
        <authorList>
            <person name="Wagner S."/>
            <person name="Grin I."/>
            <person name="Malmsheimer S."/>
            <person name="Singh N."/>
            <person name="Torres-Vargas C.E."/>
            <person name="Westerhausen S."/>
        </authorList>
    </citation>
    <scope>REVIEW</scope>
    <scope>SUBUNIT</scope>
</reference>
<reference evidence="16 17" key="12">
    <citation type="journal article" date="2006" name="Proc. Natl. Acad. Sci. U.S.A.">
        <title>Molecular model of a type III secretion system needle: Implications for host-cell sensing.</title>
        <authorList>
            <person name="Deane J.E."/>
            <person name="Roversi P."/>
            <person name="Cordes F.S."/>
            <person name="Johnson S."/>
            <person name="Kenjale R."/>
            <person name="Daniell S."/>
            <person name="Booy F."/>
            <person name="Picking W.D."/>
            <person name="Picking W.L."/>
            <person name="Blocker A.J."/>
            <person name="Lea S.M."/>
        </authorList>
    </citation>
    <scope>X-RAY CRYSTALLOGRAPHY (2.10 ANGSTROMS) OF 1-81</scope>
    <scope>FUNCTION</scope>
    <scope>SUBUNIT</scope>
</reference>
<reference key="13">
    <citation type="journal article" date="2007" name="Micron">
        <title>Structural organization of the needle complex of the type III secretion apparatus of Shigella flexneri.</title>
        <authorList>
            <person name="Sani M."/>
            <person name="Allaoui A."/>
            <person name="Fusetti F."/>
            <person name="Oostergetel G.T."/>
            <person name="Keegstra W."/>
            <person name="Boekema E.J."/>
        </authorList>
    </citation>
    <scope>STRUCTURE BY ELECTRON MICROSCOPY</scope>
    <scope>FUNCTION</scope>
    <scope>SUBUNIT</scope>
    <source>
        <strain>M90T / Serotype 5a</strain>
    </source>
</reference>
<reference evidence="18" key="14">
    <citation type="journal article" date="2012" name="Proc. Natl. Acad. Sci. U.S.A.">
        <title>Structure of a type III secretion needle at 7-A resolution provides insights into its assembly and signaling mechanisms.</title>
        <authorList>
            <person name="Fujii T."/>
            <person name="Cheung M."/>
            <person name="Blanco A."/>
            <person name="Kato T."/>
            <person name="Blocker A.J."/>
            <person name="Namba K."/>
        </authorList>
    </citation>
    <scope>STRUCTURE BY ELECTRON MICROSCOPY (7.70 ANGSTROMS) OF 2-83</scope>
    <scope>FUNCTION</scope>
    <scope>SUBUNIT</scope>
</reference>
<reference evidence="19" key="15">
    <citation type="journal article" date="2020" name="PLoS Pathog.">
        <title>Cryo-EM structure of the Shigella type III needle complex.</title>
        <authorList>
            <person name="Lunelli M."/>
            <person name="Kamprad A."/>
            <person name="Burger J."/>
            <person name="Mielke T."/>
            <person name="Spahn C.M.T."/>
            <person name="Kolbe M."/>
        </authorList>
    </citation>
    <scope>STRUCTURE BY ELECTRON MICROSCOPY (5.11 ANGSTROMS) IN COMPLEX WITH SPAP/SCTR; SPAQ/SCTS AND SPAR/SCTT</scope>
    <scope>FUNCTION</scope>
    <scope>SUBUNIT</scope>
    <source>
        <strain>M90T / Serotype 5a</strain>
    </source>
</reference>
<reference evidence="20" key="16">
    <citation type="journal article" date="2021" name="Biochem. Biophys. Rep.">
        <title>Helical reconstruction of Salmonella and Shigella needle filaments attached to type 3 basal bodies.</title>
        <authorList>
            <person name="Kotov V."/>
            <person name="Lunelli M."/>
            <person name="Wald J."/>
            <person name="Kolbe M."/>
            <person name="Marlovits T.C."/>
        </authorList>
    </citation>
    <scope>STRUCTURE BY ELECTRON MICROSCOPY (3.60 ANGSTROMS) OF NEEDLE FILAMENTS ATTACHED TO THE BASAL BODY</scope>
    <scope>SUBUNIT</scope>
    <scope>DOMAIN</scope>
</reference>
<reference evidence="21" key="17">
    <citation type="journal article" date="2023" name="Protein Sci.">
        <title>Integrative structural analysis of the type III secretion system needle complex from Shigella flexneri.</title>
        <authorList>
            <person name="Flacht L."/>
            <person name="Lunelli M."/>
            <person name="Kaszuba K."/>
            <person name="Chen Z.A."/>
            <person name="O'Reilly F.J."/>
            <person name="Rappsilber J."/>
            <person name="Kosinski J."/>
            <person name="Kolbe M."/>
        </authorList>
    </citation>
    <scope>STRUCTURE BY ELECTRON MICROSCOPY (4.05 ANGSTROMS) OF THE T3SS</scope>
    <scope>FUNCTION</scope>
    <scope>SUBUNIT</scope>
    <source>
        <strain>M90T / Serotype 5a</strain>
    </source>
</reference>
<sequence length="83" mass="9265">MSVTVPNDDWTLSSLSETFDDGTQTLQGELTLALDKLAKNPSNPQLLAEYQSKLSEYTLYRNAQSNTVKVIKDVDAAIIQNFR</sequence>
<comment type="function">
    <text evidence="1 3 4 6 9 11">Component of the type III secretion system (T3SS), also called injectisome, which is used to inject bacterial effector proteins into eukaryotic host cells (PubMed:16888041, PubMed:16920362, PubMed:32092125, PubMed:36790757). MxiH/SctF forms the external needle filament that protrudes from the bacterial surface (PubMed:16501225, PubMed:16888041, PubMed:16920362, PubMed:22388746, PubMed:32092125, PubMed:36790757).</text>
</comment>
<comment type="function">
    <text evidence="7">During infection, can induce innate immune responses (PubMed:24643544). The needle proteins interact with host TLR2 or TLR4, and induce signaling by NF-kappa-B and/or AP-1 (PubMed:24643544). This activation is MyD88 dependent and results in increased expression of cytokines, including TNF-alpha, IL-6 and IL-8 (PubMed:24643544).</text>
</comment>
<comment type="subunit">
    <text evidence="1 2 3 4 5 6 8 9 10 11">The core secretion machinery of the T3SS is composed of approximately 20 different proteins, including cytoplasmic components, a base, an export apparatus and a needle (PubMed:16920362, PubMed:30107569, PubMed:32092125, PubMed:36790757). This subunit polymerizes and forms the helical needle filament (PubMed:16501225, PubMed:16511329, PubMed:16888041, PubMed:16920362, PubMed:22388746, PubMed:32092125, PubMed:34258394, PubMed:36790757). Interacts with the needle tip protein IpaD/SctA (PubMed:17827155). Interacts with the export apparatus components SpaP/SctR, SpaQ/SctS and SpaR/SctT (PubMed:32092125).</text>
</comment>
<comment type="interaction">
    <interactant intactId="EBI-15861163">
        <id>P0A223</id>
    </interactant>
    <interactant intactId="EBI-15861163">
        <id>P0A223</id>
        <label>sctF</label>
    </interactant>
    <organismsDiffer>false</organismsDiffer>
    <experiments>2</experiments>
</comment>
<comment type="subcellular location">
    <subcellularLocation>
        <location evidence="15">Secreted</location>
    </subcellularLocation>
    <subcellularLocation>
        <location evidence="15">Cell surface</location>
    </subcellularLocation>
</comment>
<comment type="domain">
    <text evidence="1 10">The helical filament defines an inner channel with about 20 Angstroms diameter and has an outer diameter of approximately 70 Angstroms (PubMed:34258394). Deletion of the last five residues prevents self-association and yields monomeric proteins that allow biophysical studies (PubMed:16501225).</text>
</comment>
<comment type="similarity">
    <text evidence="15">Belongs to the SctF family.</text>
</comment>
<geneLocation type="plasmid">
    <name>pWR100</name>
</geneLocation>
<geneLocation type="plasmid">
    <name>pWR501</name>
</geneLocation>
<geneLocation type="plasmid">
    <name>pCP301</name>
</geneLocation>
<proteinExistence type="evidence at protein level"/>
<organism>
    <name type="scientific">Shigella flexneri</name>
    <dbReference type="NCBI Taxonomy" id="623"/>
    <lineage>
        <taxon>Bacteria</taxon>
        <taxon>Pseudomonadati</taxon>
        <taxon>Pseudomonadota</taxon>
        <taxon>Gammaproteobacteria</taxon>
        <taxon>Enterobacterales</taxon>
        <taxon>Enterobacteriaceae</taxon>
        <taxon>Shigella</taxon>
    </lineage>
</organism>
<keyword id="KW-0002">3D-structure</keyword>
<keyword id="KW-0614">Plasmid</keyword>
<keyword id="KW-0653">Protein transport</keyword>
<keyword id="KW-1185">Reference proteome</keyword>
<keyword id="KW-0964">Secreted</keyword>
<keyword id="KW-0813">Transport</keyword>
<keyword id="KW-0843">Virulence</keyword>
<gene>
    <name evidence="13 14" type="primary">sctF</name>
    <name evidence="12" type="synonym">mxiH</name>
    <name type="ordered locus">CP0137</name>
</gene>
<feature type="chain" id="PRO_0000096659" description="Type 3 secretion system needle filament protein">
    <location>
        <begin position="1"/>
        <end position="83"/>
    </location>
</feature>
<feature type="mutagenesis site" description="Has a minor effect on IpaD/SctA binding to the needle and partially reduces invasion and hemolysis." evidence="5">
    <original>L</original>
    <variation>A</variation>
    <location>
        <position position="34"/>
    </location>
</feature>
<feature type="mutagenesis site" description="Has minimal effects on the needle tip complex formation." evidence="5">
    <original>N</original>
    <variation>A</variation>
    <location>
        <position position="40"/>
    </location>
</feature>
<feature type="mutagenesis site" description="Has minimal effects on the needle tip complex formation." evidence="5">
    <original>N</original>
    <variation>A</variation>
    <location>
        <position position="43"/>
    </location>
</feature>
<feature type="mutagenesis site" description="Decreases needle tip complex formation." evidence="5">
    <original>N</original>
    <variation>K</variation>
    <location>
        <position position="43"/>
    </location>
</feature>
<feature type="mutagenesis site" description="Can form needles. Abolishes IpaD/SctA surface presentation, resulting in a noninvasive, nonhemolytic strain that also completely lacks secretion control." evidence="5">
    <original>L</original>
    <variation>A</variation>
    <variation>D</variation>
    <location>
        <position position="47"/>
    </location>
</feature>
<feature type="mutagenesis site" description="Can form needles. Results in a 50 to 80% reduction in IpaD/SctA surface presentation, which negatively affects invasion, hemolysis or secretion control." evidence="5">
    <original>Y</original>
    <variation>F</variation>
    <variation>L</variation>
    <location>
        <position position="50"/>
    </location>
</feature>
<feature type="mutagenesis site" description="Cannot polymerize, forms only monomers." evidence="1">
    <location>
        <begin position="79"/>
        <end position="83"/>
    </location>
</feature>
<feature type="helix" evidence="22">
    <location>
        <begin position="22"/>
        <end position="39"/>
    </location>
</feature>
<feature type="helix" evidence="22">
    <location>
        <begin position="44"/>
        <end position="79"/>
    </location>
</feature>
<dbReference type="EMBL" id="M98390">
    <property type="protein sequence ID" value="AAA26530.1"/>
    <property type="molecule type" value="Genomic_DNA"/>
</dbReference>
<dbReference type="EMBL" id="AL391753">
    <property type="protein sequence ID" value="CAC05812.1"/>
    <property type="molecule type" value="Genomic_DNA"/>
</dbReference>
<dbReference type="EMBL" id="AF348706">
    <property type="protein sequence ID" value="AAK18456.1"/>
    <property type="molecule type" value="Genomic_DNA"/>
</dbReference>
<dbReference type="EMBL" id="AF386526">
    <property type="protein sequence ID" value="AAL72553.1"/>
    <property type="molecule type" value="Genomic_DNA"/>
</dbReference>
<dbReference type="EMBL" id="Z48957">
    <property type="protein sequence ID" value="CAA88823.1"/>
    <property type="molecule type" value="Genomic_DNA"/>
</dbReference>
<dbReference type="PIR" id="A45271">
    <property type="entry name" value="A45271"/>
</dbReference>
<dbReference type="RefSeq" id="NP_085300.1">
    <property type="nucleotide sequence ID" value="NC_002698.1"/>
</dbReference>
<dbReference type="RefSeq" id="NP_858270.1">
    <property type="nucleotide sequence ID" value="NC_004851.1"/>
</dbReference>
<dbReference type="RefSeq" id="WP_010921669.1">
    <property type="nucleotide sequence ID" value="NZ_WPGS01000043.1"/>
</dbReference>
<dbReference type="RefSeq" id="YP_009062494.1">
    <property type="nucleotide sequence ID" value="NC_024996.1"/>
</dbReference>
<dbReference type="PDB" id="2CA5">
    <property type="method" value="X-ray"/>
    <property type="resolution" value="2.10 A"/>
    <property type="chains" value="A/B=1-78"/>
</dbReference>
<dbReference type="PDB" id="2V6L">
    <property type="method" value="EM"/>
    <property type="resolution" value="16.00 A"/>
    <property type="chains" value="0/1/A/B/C/D/E/F/G/H/I/J/K/L/M/N/O/P/Q/R/S/T/U/V/W/X/Y/Z=1-83"/>
</dbReference>
<dbReference type="PDB" id="3J0R">
    <property type="method" value="EM"/>
    <property type="resolution" value="7.70 A"/>
    <property type="chains" value="A=2-83"/>
</dbReference>
<dbReference type="PDB" id="6RWY">
    <property type="method" value="EM"/>
    <property type="resolution" value="5.11 A"/>
    <property type="chains" value="L/M/N/O/P/Q/R/S/T/U/V=1-83"/>
</dbReference>
<dbReference type="PDB" id="6ZNI">
    <property type="method" value="EM"/>
    <property type="resolution" value="3.60 A"/>
    <property type="chains" value="A/B/C/D/E/F/G/H/I/J/K/L/M/N/O/P/Q/R/S/T/U/V/W=1-83"/>
</dbReference>
<dbReference type="PDB" id="8AXK">
    <property type="method" value="EM"/>
    <property type="resolution" value="4.05 A"/>
    <property type="chains" value="S/T/U/V/W/a/b/c/d/e/f/g/h/i/j/k/l/m/n/o/p/q/r/s/t/u/v/w=1-83"/>
</dbReference>
<dbReference type="PDBsum" id="2CA5"/>
<dbReference type="PDBsum" id="2V6L"/>
<dbReference type="PDBsum" id="3J0R"/>
<dbReference type="PDBsum" id="6RWY"/>
<dbReference type="PDBsum" id="6ZNI"/>
<dbReference type="PDBsum" id="8AXK"/>
<dbReference type="EMDB" id="EMD-11312"/>
<dbReference type="EMDB" id="EMD-15700"/>
<dbReference type="SMR" id="P0A223"/>
<dbReference type="DIP" id="DIP-59026N"/>
<dbReference type="PaxDb" id="198214-CP0137"/>
<dbReference type="GeneID" id="1238256"/>
<dbReference type="KEGG" id="sfl:CP0137"/>
<dbReference type="HOGENOM" id="CLU_171855_1_1_6"/>
<dbReference type="EvolutionaryTrace" id="P0A223"/>
<dbReference type="Proteomes" id="UP000001006">
    <property type="component" value="Plasmid pCP301"/>
</dbReference>
<dbReference type="GO" id="GO:0009986">
    <property type="term" value="C:cell surface"/>
    <property type="evidence" value="ECO:0007669"/>
    <property type="project" value="UniProtKB-SubCell"/>
</dbReference>
<dbReference type="GO" id="GO:0005576">
    <property type="term" value="C:extracellular region"/>
    <property type="evidence" value="ECO:0007669"/>
    <property type="project" value="UniProtKB-SubCell"/>
</dbReference>
<dbReference type="GO" id="GO:0030257">
    <property type="term" value="C:type III protein secretion system complex"/>
    <property type="evidence" value="ECO:0007669"/>
    <property type="project" value="InterPro"/>
</dbReference>
<dbReference type="GO" id="GO:0042802">
    <property type="term" value="F:identical protein binding"/>
    <property type="evidence" value="ECO:0000353"/>
    <property type="project" value="IntAct"/>
</dbReference>
<dbReference type="GO" id="GO:0030254">
    <property type="term" value="P:protein secretion by the type III secretion system"/>
    <property type="evidence" value="ECO:0007669"/>
    <property type="project" value="InterPro"/>
</dbReference>
<dbReference type="FunFam" id="1.20.58.90:FF:000006">
    <property type="entry name" value="Type III secretion system needle complex protein"/>
    <property type="match status" value="1"/>
</dbReference>
<dbReference type="Gene3D" id="1.20.58.90">
    <property type="match status" value="1"/>
</dbReference>
<dbReference type="InterPro" id="IPR021123">
    <property type="entry name" value="T3SS_needle-like"/>
</dbReference>
<dbReference type="InterPro" id="IPR037203">
    <property type="entry name" value="T3SS_needle-like_sf"/>
</dbReference>
<dbReference type="InterPro" id="IPR011841">
    <property type="entry name" value="T3SS_needle_YscF"/>
</dbReference>
<dbReference type="NCBIfam" id="TIGR02105">
    <property type="entry name" value="III_needle"/>
    <property type="match status" value="1"/>
</dbReference>
<dbReference type="NCBIfam" id="NF011854">
    <property type="entry name" value="PRK15326.1"/>
    <property type="match status" value="1"/>
</dbReference>
<dbReference type="Pfam" id="PF09392">
    <property type="entry name" value="T3SS_needle_F"/>
    <property type="match status" value="1"/>
</dbReference>
<dbReference type="SUPFAM" id="SSF140129">
    <property type="entry name" value="MxiH-like"/>
    <property type="match status" value="1"/>
</dbReference>
<evidence type="ECO:0000269" key="1">
    <source>
    </source>
</evidence>
<evidence type="ECO:0000269" key="2">
    <source>
    </source>
</evidence>
<evidence type="ECO:0000269" key="3">
    <source>
    </source>
</evidence>
<evidence type="ECO:0000269" key="4">
    <source>
    </source>
</evidence>
<evidence type="ECO:0000269" key="5">
    <source>
    </source>
</evidence>
<evidence type="ECO:0000269" key="6">
    <source>
    </source>
</evidence>
<evidence type="ECO:0000269" key="7">
    <source>
    </source>
</evidence>
<evidence type="ECO:0000269" key="8">
    <source>
    </source>
</evidence>
<evidence type="ECO:0000269" key="9">
    <source>
    </source>
</evidence>
<evidence type="ECO:0000269" key="10">
    <source>
    </source>
</evidence>
<evidence type="ECO:0000269" key="11">
    <source>
    </source>
</evidence>
<evidence type="ECO:0000303" key="12">
    <source>
    </source>
</evidence>
<evidence type="ECO:0000303" key="13">
    <source>
    </source>
</evidence>
<evidence type="ECO:0000303" key="14">
    <source>
    </source>
</evidence>
<evidence type="ECO:0000305" key="15"/>
<evidence type="ECO:0007744" key="16">
    <source>
        <dbReference type="PDB" id="2CA5"/>
    </source>
</evidence>
<evidence type="ECO:0007744" key="17">
    <source>
        <dbReference type="PDB" id="2V6L"/>
    </source>
</evidence>
<evidence type="ECO:0007744" key="18">
    <source>
        <dbReference type="PDB" id="3J0R"/>
    </source>
</evidence>
<evidence type="ECO:0007744" key="19">
    <source>
        <dbReference type="PDB" id="6RWY"/>
    </source>
</evidence>
<evidence type="ECO:0007744" key="20">
    <source>
        <dbReference type="PDB" id="6ZNI"/>
    </source>
</evidence>
<evidence type="ECO:0007744" key="21">
    <source>
        <dbReference type="PDB" id="8AXK"/>
    </source>
</evidence>
<evidence type="ECO:0007829" key="22">
    <source>
        <dbReference type="PDB" id="2CA5"/>
    </source>
</evidence>
<accession>P0A223</accession>
<accession>Q06079</accession>
<accession>Q6LAA7</accession>
<protein>
    <recommendedName>
        <fullName evidence="15">Type 3 secretion system needle filament protein</fullName>
        <shortName evidence="15">T3SS needle filament protein</shortName>
    </recommendedName>
</protein>
<name>SCTF_SHIFL</name>